<proteinExistence type="evidence at protein level"/>
<protein>
    <recommendedName>
        <fullName>E3 ubiquitin-protein ligase TRIM69</fullName>
        <ecNumber>2.3.2.27</ecNumber>
    </recommendedName>
    <alternativeName>
        <fullName>RING finger protein 36</fullName>
    </alternativeName>
    <alternativeName>
        <fullName evidence="7">RING-type E3 ubiquitin transferase TRIM69</fullName>
    </alternativeName>
    <alternativeName>
        <fullName>Tripartite motif-containing protein 69</fullName>
    </alternativeName>
</protein>
<dbReference type="EC" id="2.3.2.27"/>
<dbReference type="EMBL" id="BC091171">
    <property type="protein sequence ID" value="AAH91171.1"/>
    <property type="molecule type" value="mRNA"/>
</dbReference>
<dbReference type="RefSeq" id="NP_001013178.1">
    <property type="nucleotide sequence ID" value="NM_001013160.1"/>
</dbReference>
<dbReference type="SMR" id="Q5BK82"/>
<dbReference type="FunCoup" id="Q5BK82">
    <property type="interactions" value="123"/>
</dbReference>
<dbReference type="STRING" id="10116.ENSRNOP00000023209"/>
<dbReference type="iPTMnet" id="Q5BK82"/>
<dbReference type="PhosphoSitePlus" id="Q5BK82"/>
<dbReference type="PaxDb" id="10116-ENSRNOP00000023209"/>
<dbReference type="Ensembl" id="ENSRNOT00000023209.7">
    <property type="protein sequence ID" value="ENSRNOP00000023209.4"/>
    <property type="gene ID" value="ENSRNOG00000017157.7"/>
</dbReference>
<dbReference type="GeneID" id="311373"/>
<dbReference type="KEGG" id="rno:311373"/>
<dbReference type="UCSC" id="RGD:1305074">
    <property type="organism name" value="rat"/>
</dbReference>
<dbReference type="AGR" id="RGD:1305074"/>
<dbReference type="CTD" id="140691"/>
<dbReference type="RGD" id="1305074">
    <property type="gene designation" value="Trim69"/>
</dbReference>
<dbReference type="eggNOG" id="KOG2177">
    <property type="taxonomic scope" value="Eukaryota"/>
</dbReference>
<dbReference type="GeneTree" id="ENSGT00940000160707"/>
<dbReference type="HOGENOM" id="CLU_013137_0_3_1"/>
<dbReference type="InParanoid" id="Q5BK82"/>
<dbReference type="OMA" id="TEELTIH"/>
<dbReference type="OrthoDB" id="6270329at2759"/>
<dbReference type="PhylomeDB" id="Q5BK82"/>
<dbReference type="TreeFam" id="TF342569"/>
<dbReference type="Reactome" id="R-RNO-983168">
    <property type="pathway name" value="Antigen processing: Ubiquitination &amp; Proteasome degradation"/>
</dbReference>
<dbReference type="UniPathway" id="UPA00143"/>
<dbReference type="PRO" id="PR:Q5BK82"/>
<dbReference type="Proteomes" id="UP000002494">
    <property type="component" value="Chromosome 3"/>
</dbReference>
<dbReference type="Bgee" id="ENSRNOG00000017157">
    <property type="expression patterns" value="Expressed in testis and 11 other cell types or tissues"/>
</dbReference>
<dbReference type="GO" id="GO:0005813">
    <property type="term" value="C:centrosome"/>
    <property type="evidence" value="ECO:0000266"/>
    <property type="project" value="RGD"/>
</dbReference>
<dbReference type="GO" id="GO:0005737">
    <property type="term" value="C:cytoplasm"/>
    <property type="evidence" value="ECO:0000250"/>
    <property type="project" value="UniProtKB"/>
</dbReference>
<dbReference type="GO" id="GO:0016607">
    <property type="term" value="C:nuclear speck"/>
    <property type="evidence" value="ECO:0000250"/>
    <property type="project" value="UniProtKB"/>
</dbReference>
<dbReference type="GO" id="GO:0005634">
    <property type="term" value="C:nucleus"/>
    <property type="evidence" value="ECO:0000250"/>
    <property type="project" value="UniProtKB"/>
</dbReference>
<dbReference type="GO" id="GO:0061630">
    <property type="term" value="F:ubiquitin protein ligase activity"/>
    <property type="evidence" value="ECO:0000266"/>
    <property type="project" value="RGD"/>
</dbReference>
<dbReference type="GO" id="GO:0004842">
    <property type="term" value="F:ubiquitin-protein transferase activity"/>
    <property type="evidence" value="ECO:0000250"/>
    <property type="project" value="UniProtKB"/>
</dbReference>
<dbReference type="GO" id="GO:0008270">
    <property type="term" value="F:zinc ion binding"/>
    <property type="evidence" value="ECO:0007669"/>
    <property type="project" value="UniProtKB-KW"/>
</dbReference>
<dbReference type="GO" id="GO:0006915">
    <property type="term" value="P:apoptotic process"/>
    <property type="evidence" value="ECO:0007669"/>
    <property type="project" value="UniProtKB-KW"/>
</dbReference>
<dbReference type="GO" id="GO:0045087">
    <property type="term" value="P:innate immune response"/>
    <property type="evidence" value="ECO:0000318"/>
    <property type="project" value="GO_Central"/>
</dbReference>
<dbReference type="GO" id="GO:0071539">
    <property type="term" value="P:protein localization to centrosome"/>
    <property type="evidence" value="ECO:0000266"/>
    <property type="project" value="RGD"/>
</dbReference>
<dbReference type="GO" id="GO:0016567">
    <property type="term" value="P:protein ubiquitination"/>
    <property type="evidence" value="ECO:0007669"/>
    <property type="project" value="UniProtKB-UniPathway"/>
</dbReference>
<dbReference type="CDD" id="cd16611">
    <property type="entry name" value="RING-HC_TRIM69_C-IV"/>
    <property type="match status" value="1"/>
</dbReference>
<dbReference type="FunFam" id="2.60.120.920:FF:000058">
    <property type="entry name" value="E3 ubiquitin-protein ligase TRIM69"/>
    <property type="match status" value="1"/>
</dbReference>
<dbReference type="FunFam" id="3.30.160.60:FF:002162">
    <property type="entry name" value="E3 ubiquitin-protein ligase TRIM69"/>
    <property type="match status" value="1"/>
</dbReference>
<dbReference type="FunFam" id="3.30.40.10:FF:000583">
    <property type="entry name" value="E3 ubiquitin-protein ligase TRIM69"/>
    <property type="match status" value="1"/>
</dbReference>
<dbReference type="Gene3D" id="2.60.120.920">
    <property type="match status" value="1"/>
</dbReference>
<dbReference type="Gene3D" id="3.30.160.60">
    <property type="entry name" value="Classic Zinc Finger"/>
    <property type="match status" value="1"/>
</dbReference>
<dbReference type="Gene3D" id="3.30.40.10">
    <property type="entry name" value="Zinc/RING finger domain, C3HC4 (zinc finger)"/>
    <property type="match status" value="1"/>
</dbReference>
<dbReference type="InterPro" id="IPR001870">
    <property type="entry name" value="B30.2/SPRY"/>
</dbReference>
<dbReference type="InterPro" id="IPR043136">
    <property type="entry name" value="B30.2/SPRY_sf"/>
</dbReference>
<dbReference type="InterPro" id="IPR003879">
    <property type="entry name" value="Butyrophylin_SPRY"/>
</dbReference>
<dbReference type="InterPro" id="IPR013320">
    <property type="entry name" value="ConA-like_dom_sf"/>
</dbReference>
<dbReference type="InterPro" id="IPR006574">
    <property type="entry name" value="PRY"/>
</dbReference>
<dbReference type="InterPro" id="IPR003877">
    <property type="entry name" value="SPRY_dom"/>
</dbReference>
<dbReference type="InterPro" id="IPR050143">
    <property type="entry name" value="TRIM/RBCC"/>
</dbReference>
<dbReference type="InterPro" id="IPR001841">
    <property type="entry name" value="Znf_RING"/>
</dbReference>
<dbReference type="InterPro" id="IPR013083">
    <property type="entry name" value="Znf_RING/FYVE/PHD"/>
</dbReference>
<dbReference type="InterPro" id="IPR017907">
    <property type="entry name" value="Znf_RING_CS"/>
</dbReference>
<dbReference type="PANTHER" id="PTHR24103">
    <property type="entry name" value="E3 UBIQUITIN-PROTEIN LIGASE TRIM"/>
    <property type="match status" value="1"/>
</dbReference>
<dbReference type="Pfam" id="PF13765">
    <property type="entry name" value="PRY"/>
    <property type="match status" value="1"/>
</dbReference>
<dbReference type="Pfam" id="PF00622">
    <property type="entry name" value="SPRY"/>
    <property type="match status" value="1"/>
</dbReference>
<dbReference type="Pfam" id="PF15227">
    <property type="entry name" value="zf-C3HC4_4"/>
    <property type="match status" value="1"/>
</dbReference>
<dbReference type="PRINTS" id="PR01407">
    <property type="entry name" value="BUTYPHLNCDUF"/>
</dbReference>
<dbReference type="SMART" id="SM00589">
    <property type="entry name" value="PRY"/>
    <property type="match status" value="1"/>
</dbReference>
<dbReference type="SMART" id="SM00184">
    <property type="entry name" value="RING"/>
    <property type="match status" value="1"/>
</dbReference>
<dbReference type="SMART" id="SM00449">
    <property type="entry name" value="SPRY"/>
    <property type="match status" value="1"/>
</dbReference>
<dbReference type="SUPFAM" id="SSF57845">
    <property type="entry name" value="B-box zinc-binding domain"/>
    <property type="match status" value="1"/>
</dbReference>
<dbReference type="SUPFAM" id="SSF49899">
    <property type="entry name" value="Concanavalin A-like lectins/glucanases"/>
    <property type="match status" value="1"/>
</dbReference>
<dbReference type="SUPFAM" id="SSF57850">
    <property type="entry name" value="RING/U-box"/>
    <property type="match status" value="1"/>
</dbReference>
<dbReference type="PROSITE" id="PS50188">
    <property type="entry name" value="B302_SPRY"/>
    <property type="match status" value="1"/>
</dbReference>
<dbReference type="PROSITE" id="PS00518">
    <property type="entry name" value="ZF_RING_1"/>
    <property type="match status" value="1"/>
</dbReference>
<dbReference type="PROSITE" id="PS50089">
    <property type="entry name" value="ZF_RING_2"/>
    <property type="match status" value="1"/>
</dbReference>
<evidence type="ECO:0000250" key="1"/>
<evidence type="ECO:0000250" key="2">
    <source>
        <dbReference type="UniProtKB" id="Q80X56"/>
    </source>
</evidence>
<evidence type="ECO:0000250" key="3">
    <source>
        <dbReference type="UniProtKB" id="Q86WT6"/>
    </source>
</evidence>
<evidence type="ECO:0000255" key="4"/>
<evidence type="ECO:0000255" key="5">
    <source>
        <dbReference type="PROSITE-ProRule" id="PRU00175"/>
    </source>
</evidence>
<evidence type="ECO:0000255" key="6">
    <source>
        <dbReference type="PROSITE-ProRule" id="PRU00548"/>
    </source>
</evidence>
<evidence type="ECO:0000305" key="7"/>
<evidence type="ECO:0007744" key="8">
    <source>
    </source>
</evidence>
<organism>
    <name type="scientific">Rattus norvegicus</name>
    <name type="common">Rat</name>
    <dbReference type="NCBI Taxonomy" id="10116"/>
    <lineage>
        <taxon>Eukaryota</taxon>
        <taxon>Metazoa</taxon>
        <taxon>Chordata</taxon>
        <taxon>Craniata</taxon>
        <taxon>Vertebrata</taxon>
        <taxon>Euteleostomi</taxon>
        <taxon>Mammalia</taxon>
        <taxon>Eutheria</taxon>
        <taxon>Euarchontoglires</taxon>
        <taxon>Glires</taxon>
        <taxon>Rodentia</taxon>
        <taxon>Myomorpha</taxon>
        <taxon>Muroidea</taxon>
        <taxon>Muridae</taxon>
        <taxon>Murinae</taxon>
        <taxon>Rattus</taxon>
    </lineage>
</organism>
<gene>
    <name type="primary">Trim69</name>
    <name type="synonym">Rnf36</name>
</gene>
<reference key="1">
    <citation type="journal article" date="2004" name="Genome Res.">
        <title>The status, quality, and expansion of the NIH full-length cDNA project: the Mammalian Gene Collection (MGC).</title>
        <authorList>
            <consortium name="The MGC Project Team"/>
        </authorList>
    </citation>
    <scope>NUCLEOTIDE SEQUENCE [LARGE SCALE MRNA]</scope>
    <source>
        <tissue>Testis</tissue>
    </source>
</reference>
<reference key="2">
    <citation type="journal article" date="2012" name="Nat. Commun.">
        <title>Quantitative maps of protein phosphorylation sites across 14 different rat organs and tissues.</title>
        <authorList>
            <person name="Lundby A."/>
            <person name="Secher A."/>
            <person name="Lage K."/>
            <person name="Nordsborg N.B."/>
            <person name="Dmytriyev A."/>
            <person name="Lundby C."/>
            <person name="Olsen J.V."/>
        </authorList>
    </citation>
    <scope>PHOSPHORYLATION [LARGE SCALE ANALYSIS] AT SER-341</scope>
    <scope>IDENTIFICATION BY MASS SPECTROMETRY [LARGE SCALE ANALYSIS]</scope>
</reference>
<sequence length="499" mass="57215">MEVSSRPPSNFDPGNYVEVSDPSTHLPSKVVIQDITTELHCPLCNDWFRDPLMLTCGHNFCQACIQNYWKMQAKETFCPECKMLCQYSNCTFNLVLEKLVEKIKRLPLLKGHPQCPEHGENLKLFSKPDGKMICFQCKDARLSMGQSKDFLQISEAVRFFTEELAIYQSQLQTTLKELQSLRTMQKDAIAAYKDNKIQLQQNLSLEFLKLHQFLHNKEKDILNDLRDEGKVLNEEMDANLNQIQEQCLLAKDMLANIQARMEQQNSFDFLTDITKLLENMEKGMKTLVPRQLISKKLSLGRFKGPIQYTIWREMQSILSPGPSQLTLDPKTAHPNLVLSNSRTSVCHGDVKQVMPDDPERFDSSVAVLGSKGFTSGKWYWEIEVAKKTKWTIGIVRESIIRKGSCPLTPEQGFWLLRLRNQTDLKALDLPSCSLNLGDLRRVGVYLDYEGGQVSFYNATNMTHLYTFTSVFLEKLFPYLCPCLNDGGENKEPLHIVHPQ</sequence>
<feature type="chain" id="PRO_0000278238" description="E3 ubiquitin-protein ligase TRIM69">
    <location>
        <begin position="1"/>
        <end position="499"/>
    </location>
</feature>
<feature type="domain" description="B30.2/SPRY" evidence="6">
    <location>
        <begin position="305"/>
        <end position="499"/>
    </location>
</feature>
<feature type="zinc finger region" description="RING-type" evidence="5">
    <location>
        <begin position="41"/>
        <end position="82"/>
    </location>
</feature>
<feature type="region of interest" description="Necessary for nuclear localization" evidence="1">
    <location>
        <begin position="1"/>
        <end position="152"/>
    </location>
</feature>
<feature type="coiled-coil region" evidence="4">
    <location>
        <begin position="160"/>
        <end position="265"/>
    </location>
</feature>
<feature type="modified residue" description="Phosphoserine" evidence="8">
    <location>
        <position position="341"/>
    </location>
</feature>
<keyword id="KW-0053">Apoptosis</keyword>
<keyword id="KW-0175">Coiled coil</keyword>
<keyword id="KW-0963">Cytoplasm</keyword>
<keyword id="KW-0206">Cytoskeleton</keyword>
<keyword id="KW-0479">Metal-binding</keyword>
<keyword id="KW-0539">Nucleus</keyword>
<keyword id="KW-0597">Phosphoprotein</keyword>
<keyword id="KW-1185">Reference proteome</keyword>
<keyword id="KW-0808">Transferase</keyword>
<keyword id="KW-0833">Ubl conjugation pathway</keyword>
<keyword id="KW-0862">Zinc</keyword>
<keyword id="KW-0863">Zinc-finger</keyword>
<accession>Q5BK82</accession>
<name>TRI69_RAT</name>
<comment type="function">
    <text evidence="3">E3 ubiquitin ligase that plays an important role in antiviral immunity by restricting different viral infections including dengue virus or vesicular stomatitis indiana virus. Ubiquitinates viral proteins such as dengue virus NS3 thereby limiting infection. In addition, acts as a key mediator of type I interferon induced microtubule stabilization by directly associating to microtubules independently of its E3 ligase activity. Also plays a role in cataract formation together with TP53. Mechanistically, inhibits UVB-induced cell apoptosis and reactive oxygen species (ROS) production by inducing TP53 ubiquitination. Regulates centrosome dynamics and mitotic progression by ubiquitinating STK3/MST2; leading to its redistribution to the perinuclear cytoskeleton and subsequent phosphorylation by PLK1.</text>
</comment>
<comment type="catalytic activity">
    <reaction evidence="3">
        <text>S-ubiquitinyl-[E2 ubiquitin-conjugating enzyme]-L-cysteine + [acceptor protein]-L-lysine = [E2 ubiquitin-conjugating enzyme]-L-cysteine + N(6)-ubiquitinyl-[acceptor protein]-L-lysine.</text>
        <dbReference type="EC" id="2.3.2.27"/>
    </reaction>
</comment>
<comment type="pathway">
    <text>Protein modification; protein ubiquitination.</text>
</comment>
<comment type="subunit">
    <text evidence="2 3">Homo-multimer; required for antiviral activity (By similarity). Interacts with PML (By similarity).</text>
</comment>
<comment type="subcellular location">
    <subcellularLocation>
        <location evidence="3">Cytoplasm</location>
    </subcellularLocation>
    <subcellularLocation>
        <location evidence="3">Nucleus</location>
    </subcellularLocation>
    <subcellularLocation>
        <location evidence="3">Nucleus speckle</location>
    </subcellularLocation>
    <subcellularLocation>
        <location evidence="3">Cytoplasm</location>
        <location evidence="3">Cytoskeleton</location>
        <location evidence="3">Microtubule organizing center</location>
        <location evidence="3">Centrosome</location>
    </subcellularLocation>
    <text evidence="3">Adopts a filamentous distribution in the cell cytoplasm where it strongly colocalizes with stable microtubules.</text>
</comment>
<comment type="domain">
    <text evidence="3">The RING-type zinc finger domain is responsible for E3 ubiquitin ligase activity and for nuclear localization and aggregation.</text>
</comment>
<comment type="PTM">
    <text evidence="2">Phosphorylated. Phosphorylation is necessary for nuclear localization.</text>
</comment>
<comment type="similarity">
    <text evidence="7">Belongs to the TRIM/RBCC family.</text>
</comment>